<feature type="chain" id="PRO_0000396062" description="F-box protein At3g44326">
    <location>
        <begin position="1"/>
        <end position="363"/>
    </location>
</feature>
<feature type="domain" description="F-box">
    <location>
        <begin position="27"/>
        <end position="66"/>
    </location>
</feature>
<feature type="region of interest" description="Disordered" evidence="1">
    <location>
        <begin position="1"/>
        <end position="23"/>
    </location>
</feature>
<proteinExistence type="evidence at transcript level"/>
<sequence>MLSSSSSSTVEQPSRGGSPGINAVSSDVLRSNILTRLDGSSLAALSCTCSNLNSFCSDESLWRQQCSATWPSTSDTRVQSIISTFPDGHRTFFSDSFPFLEHDVGINLPPSVDTSELISAVDIFYKDDVIFSRVHVTETVSGWFLCSPMRVDLVEPKELIPTRVLVTDQCKDDTWKSDLEENLSLSWILIDPTCKRAADVSTRKPVSVHRHWLTGEVHVKFSSIFVVGNKKRSEQVEFTVTVVLAVFNRREEETAVMQIREVSLVAEDKDGRNLGGKVSLEILVAAMGMKRRFRAGGEEEGKEKYIEYMERKTAKAEMKWRRGKETAMETAACWIAVLLLGFLLCFYLFMHKNLVAIMKKLIK</sequence>
<organism>
    <name type="scientific">Arabidopsis thaliana</name>
    <name type="common">Mouse-ear cress</name>
    <dbReference type="NCBI Taxonomy" id="3702"/>
    <lineage>
        <taxon>Eukaryota</taxon>
        <taxon>Viridiplantae</taxon>
        <taxon>Streptophyta</taxon>
        <taxon>Embryophyta</taxon>
        <taxon>Tracheophyta</taxon>
        <taxon>Spermatophyta</taxon>
        <taxon>Magnoliopsida</taxon>
        <taxon>eudicotyledons</taxon>
        <taxon>Gunneridae</taxon>
        <taxon>Pentapetalae</taxon>
        <taxon>rosids</taxon>
        <taxon>malvids</taxon>
        <taxon>Brassicales</taxon>
        <taxon>Brassicaceae</taxon>
        <taxon>Camelineae</taxon>
        <taxon>Arabidopsis</taxon>
    </lineage>
</organism>
<protein>
    <recommendedName>
        <fullName>F-box protein At3g44326</fullName>
    </recommendedName>
</protein>
<name>FB346_ARATH</name>
<evidence type="ECO:0000256" key="1">
    <source>
        <dbReference type="SAM" id="MobiDB-lite"/>
    </source>
</evidence>
<reference key="1">
    <citation type="journal article" date="2000" name="Nature">
        <title>Sequence and analysis of chromosome 3 of the plant Arabidopsis thaliana.</title>
        <authorList>
            <person name="Salanoubat M."/>
            <person name="Lemcke K."/>
            <person name="Rieger M."/>
            <person name="Ansorge W."/>
            <person name="Unseld M."/>
            <person name="Fartmann B."/>
            <person name="Valle G."/>
            <person name="Bloecker H."/>
            <person name="Perez-Alonso M."/>
            <person name="Obermaier B."/>
            <person name="Delseny M."/>
            <person name="Boutry M."/>
            <person name="Grivell L.A."/>
            <person name="Mache R."/>
            <person name="Puigdomenech P."/>
            <person name="De Simone V."/>
            <person name="Choisne N."/>
            <person name="Artiguenave F."/>
            <person name="Robert C."/>
            <person name="Brottier P."/>
            <person name="Wincker P."/>
            <person name="Cattolico L."/>
            <person name="Weissenbach J."/>
            <person name="Saurin W."/>
            <person name="Quetier F."/>
            <person name="Schaefer M."/>
            <person name="Mueller-Auer S."/>
            <person name="Gabel C."/>
            <person name="Fuchs M."/>
            <person name="Benes V."/>
            <person name="Wurmbach E."/>
            <person name="Drzonek H."/>
            <person name="Erfle H."/>
            <person name="Jordan N."/>
            <person name="Bangert S."/>
            <person name="Wiedelmann R."/>
            <person name="Kranz H."/>
            <person name="Voss H."/>
            <person name="Holland R."/>
            <person name="Brandt P."/>
            <person name="Nyakatura G."/>
            <person name="Vezzi A."/>
            <person name="D'Angelo M."/>
            <person name="Pallavicini A."/>
            <person name="Toppo S."/>
            <person name="Simionati B."/>
            <person name="Conrad A."/>
            <person name="Hornischer K."/>
            <person name="Kauer G."/>
            <person name="Loehnert T.-H."/>
            <person name="Nordsiek G."/>
            <person name="Reichelt J."/>
            <person name="Scharfe M."/>
            <person name="Schoen O."/>
            <person name="Bargues M."/>
            <person name="Terol J."/>
            <person name="Climent J."/>
            <person name="Navarro P."/>
            <person name="Collado C."/>
            <person name="Perez-Perez A."/>
            <person name="Ottenwaelder B."/>
            <person name="Duchemin D."/>
            <person name="Cooke R."/>
            <person name="Laudie M."/>
            <person name="Berger-Llauro C."/>
            <person name="Purnelle B."/>
            <person name="Masuy D."/>
            <person name="de Haan M."/>
            <person name="Maarse A.C."/>
            <person name="Alcaraz J.-P."/>
            <person name="Cottet A."/>
            <person name="Casacuberta E."/>
            <person name="Monfort A."/>
            <person name="Argiriou A."/>
            <person name="Flores M."/>
            <person name="Liguori R."/>
            <person name="Vitale D."/>
            <person name="Mannhaupt G."/>
            <person name="Haase D."/>
            <person name="Schoof H."/>
            <person name="Rudd S."/>
            <person name="Zaccaria P."/>
            <person name="Mewes H.-W."/>
            <person name="Mayer K.F.X."/>
            <person name="Kaul S."/>
            <person name="Town C.D."/>
            <person name="Koo H.L."/>
            <person name="Tallon L.J."/>
            <person name="Jenkins J."/>
            <person name="Rooney T."/>
            <person name="Rizzo M."/>
            <person name="Walts A."/>
            <person name="Utterback T."/>
            <person name="Fujii C.Y."/>
            <person name="Shea T.P."/>
            <person name="Creasy T.H."/>
            <person name="Haas B."/>
            <person name="Maiti R."/>
            <person name="Wu D."/>
            <person name="Peterson J."/>
            <person name="Van Aken S."/>
            <person name="Pai G."/>
            <person name="Militscher J."/>
            <person name="Sellers P."/>
            <person name="Gill J.E."/>
            <person name="Feldblyum T.V."/>
            <person name="Preuss D."/>
            <person name="Lin X."/>
            <person name="Nierman W.C."/>
            <person name="Salzberg S.L."/>
            <person name="White O."/>
            <person name="Venter J.C."/>
            <person name="Fraser C.M."/>
            <person name="Kaneko T."/>
            <person name="Nakamura Y."/>
            <person name="Sato S."/>
            <person name="Kato T."/>
            <person name="Asamizu E."/>
            <person name="Sasamoto S."/>
            <person name="Kimura T."/>
            <person name="Idesawa K."/>
            <person name="Kawashima K."/>
            <person name="Kishida Y."/>
            <person name="Kiyokawa C."/>
            <person name="Kohara M."/>
            <person name="Matsumoto M."/>
            <person name="Matsuno A."/>
            <person name="Muraki A."/>
            <person name="Nakayama S."/>
            <person name="Nakazaki N."/>
            <person name="Shinpo S."/>
            <person name="Takeuchi C."/>
            <person name="Wada T."/>
            <person name="Watanabe A."/>
            <person name="Yamada M."/>
            <person name="Yasuda M."/>
            <person name="Tabata S."/>
        </authorList>
    </citation>
    <scope>NUCLEOTIDE SEQUENCE [LARGE SCALE GENOMIC DNA]</scope>
    <source>
        <strain>cv. Columbia</strain>
    </source>
</reference>
<reference key="2">
    <citation type="journal article" date="2017" name="Plant J.">
        <title>Araport11: a complete reannotation of the Arabidopsis thaliana reference genome.</title>
        <authorList>
            <person name="Cheng C.Y."/>
            <person name="Krishnakumar V."/>
            <person name="Chan A.P."/>
            <person name="Thibaud-Nissen F."/>
            <person name="Schobel S."/>
            <person name="Town C.D."/>
        </authorList>
    </citation>
    <scope>GENOME REANNOTATION</scope>
    <source>
        <strain>cv. Columbia</strain>
    </source>
</reference>
<reference key="3">
    <citation type="journal article" date="2006" name="Plant Biotechnol. J.">
        <title>Simultaneous high-throughput recombinational cloning of open reading frames in closed and open configurations.</title>
        <authorList>
            <person name="Underwood B.A."/>
            <person name="Vanderhaeghen R."/>
            <person name="Whitford R."/>
            <person name="Town C.D."/>
            <person name="Hilson P."/>
        </authorList>
    </citation>
    <scope>NUCLEOTIDE SEQUENCE [LARGE SCALE GENOMIC DNA]</scope>
    <source>
        <strain>cv. Columbia</strain>
    </source>
</reference>
<reference key="4">
    <citation type="submission" date="2006-07" db="EMBL/GenBank/DDBJ databases">
        <title>Large-scale analysis of RIKEN Arabidopsis full-length (RAFL) cDNAs.</title>
        <authorList>
            <person name="Totoki Y."/>
            <person name="Seki M."/>
            <person name="Ishida J."/>
            <person name="Nakajima M."/>
            <person name="Enju A."/>
            <person name="Kamiya A."/>
            <person name="Narusaka M."/>
            <person name="Shin-i T."/>
            <person name="Nakagawa M."/>
            <person name="Sakamoto N."/>
            <person name="Oishi K."/>
            <person name="Kohara Y."/>
            <person name="Kobayashi M."/>
            <person name="Toyoda A."/>
            <person name="Sakaki Y."/>
            <person name="Sakurai T."/>
            <person name="Iida K."/>
            <person name="Akiyama K."/>
            <person name="Satou M."/>
            <person name="Toyoda T."/>
            <person name="Konagaya A."/>
            <person name="Carninci P."/>
            <person name="Kawai J."/>
            <person name="Hayashizaki Y."/>
            <person name="Shinozaki K."/>
        </authorList>
    </citation>
    <scope>NUCLEOTIDE SEQUENCE [LARGE SCALE MRNA]</scope>
    <source>
        <strain>cv. Columbia</strain>
    </source>
</reference>
<accession>Q2V3R1</accession>
<dbReference type="EMBL" id="AL138641">
    <property type="status" value="NOT_ANNOTATED_CDS"/>
    <property type="molecule type" value="Genomic_DNA"/>
</dbReference>
<dbReference type="EMBL" id="CP002686">
    <property type="protein sequence ID" value="AEE77891.1"/>
    <property type="molecule type" value="Genomic_DNA"/>
</dbReference>
<dbReference type="EMBL" id="DQ487546">
    <property type="protein sequence ID" value="ABF59355.1"/>
    <property type="molecule type" value="Genomic_DNA"/>
</dbReference>
<dbReference type="EMBL" id="AK228374">
    <property type="protein sequence ID" value="BAF00312.1"/>
    <property type="molecule type" value="mRNA"/>
</dbReference>
<dbReference type="RefSeq" id="NP_001030807.1">
    <property type="nucleotide sequence ID" value="NM_001035730.4"/>
</dbReference>
<dbReference type="SMR" id="Q2V3R1"/>
<dbReference type="FunCoup" id="Q2V3R1">
    <property type="interactions" value="55"/>
</dbReference>
<dbReference type="STRING" id="3702.Q2V3R1"/>
<dbReference type="iPTMnet" id="Q2V3R1"/>
<dbReference type="PaxDb" id="3702-AT3G44326.1"/>
<dbReference type="EnsemblPlants" id="AT3G44326.1">
    <property type="protein sequence ID" value="AT3G44326.1"/>
    <property type="gene ID" value="AT3G44326"/>
</dbReference>
<dbReference type="GeneID" id="3769632"/>
<dbReference type="Gramene" id="AT3G44326.1">
    <property type="protein sequence ID" value="AT3G44326.1"/>
    <property type="gene ID" value="AT3G44326"/>
</dbReference>
<dbReference type="KEGG" id="ath:AT3G44326"/>
<dbReference type="Araport" id="AT3G44326"/>
<dbReference type="TAIR" id="AT3G44326">
    <property type="gene designation" value="CFB"/>
</dbReference>
<dbReference type="eggNOG" id="ENOG502QVIW">
    <property type="taxonomic scope" value="Eukaryota"/>
</dbReference>
<dbReference type="HOGENOM" id="CLU_057235_0_0_1"/>
<dbReference type="InParanoid" id="Q2V3R1"/>
<dbReference type="OMA" id="ETAACWI"/>
<dbReference type="PhylomeDB" id="Q2V3R1"/>
<dbReference type="PRO" id="PR:Q2V3R1"/>
<dbReference type="Proteomes" id="UP000006548">
    <property type="component" value="Chromosome 3"/>
</dbReference>
<dbReference type="ExpressionAtlas" id="Q2V3R1">
    <property type="expression patterns" value="baseline and differential"/>
</dbReference>
<dbReference type="GO" id="GO:0016020">
    <property type="term" value="C:membrane"/>
    <property type="evidence" value="ECO:0000314"/>
    <property type="project" value="TAIR"/>
</dbReference>
<dbReference type="GO" id="GO:0019005">
    <property type="term" value="C:SCF ubiquitin ligase complex"/>
    <property type="evidence" value="ECO:0000353"/>
    <property type="project" value="TAIR"/>
</dbReference>
<dbReference type="GO" id="GO:0019218">
    <property type="term" value="P:regulation of steroid metabolic process"/>
    <property type="evidence" value="ECO:0000315"/>
    <property type="project" value="TAIR"/>
</dbReference>
<dbReference type="FunFam" id="1.20.1280.50:FF:000170">
    <property type="entry name" value="F-box protein At3g44326"/>
    <property type="match status" value="1"/>
</dbReference>
<dbReference type="Gene3D" id="1.20.1280.50">
    <property type="match status" value="1"/>
</dbReference>
<dbReference type="InterPro" id="IPR045283">
    <property type="entry name" value="AT3G44326-like"/>
</dbReference>
<dbReference type="InterPro" id="IPR036047">
    <property type="entry name" value="F-box-like_dom_sf"/>
</dbReference>
<dbReference type="InterPro" id="IPR001810">
    <property type="entry name" value="F-box_dom"/>
</dbReference>
<dbReference type="PANTHER" id="PTHR33736:SF18">
    <property type="entry name" value="F-BOX DOMAIN-CONTAINING PROTEIN"/>
    <property type="match status" value="1"/>
</dbReference>
<dbReference type="PANTHER" id="PTHR33736">
    <property type="entry name" value="F-BOX PROTEIN-RELATED"/>
    <property type="match status" value="1"/>
</dbReference>
<dbReference type="Pfam" id="PF12937">
    <property type="entry name" value="F-box-like"/>
    <property type="match status" value="1"/>
</dbReference>
<dbReference type="SUPFAM" id="SSF81383">
    <property type="entry name" value="F-box domain"/>
    <property type="match status" value="1"/>
</dbReference>
<gene>
    <name type="ordered locus">At3g44326</name>
    <name type="ORF">T22K7</name>
</gene>
<keyword id="KW-1185">Reference proteome</keyword>